<sequence length="70" mass="7554">MKPGIHPEYAVITANCTCGNVIKVNSTAGKDLHLDVCGACHPFYTGTQKVVDTGGRIDKFNKRFGMLGKK</sequence>
<protein>
    <recommendedName>
        <fullName evidence="1">Large ribosomal subunit protein bL31</fullName>
    </recommendedName>
    <alternativeName>
        <fullName evidence="2">50S ribosomal protein L31</fullName>
    </alternativeName>
</protein>
<name>RL31_SHESM</name>
<accession>Q0HEF8</accession>
<comment type="function">
    <text evidence="1">Binds the 23S rRNA.</text>
</comment>
<comment type="cofactor">
    <cofactor evidence="1">
        <name>Zn(2+)</name>
        <dbReference type="ChEBI" id="CHEBI:29105"/>
    </cofactor>
    <text evidence="1">Binds 1 zinc ion per subunit.</text>
</comment>
<comment type="subunit">
    <text evidence="1">Part of the 50S ribosomal subunit.</text>
</comment>
<comment type="similarity">
    <text evidence="1">Belongs to the bacterial ribosomal protein bL31 family. Type A subfamily.</text>
</comment>
<keyword id="KW-0479">Metal-binding</keyword>
<keyword id="KW-0687">Ribonucleoprotein</keyword>
<keyword id="KW-0689">Ribosomal protein</keyword>
<keyword id="KW-0694">RNA-binding</keyword>
<keyword id="KW-0699">rRNA-binding</keyword>
<keyword id="KW-0862">Zinc</keyword>
<dbReference type="EMBL" id="CP000446">
    <property type="protein sequence ID" value="ABI40559.1"/>
    <property type="molecule type" value="Genomic_DNA"/>
</dbReference>
<dbReference type="RefSeq" id="WP_011624224.1">
    <property type="nucleotide sequence ID" value="NC_008321.1"/>
</dbReference>
<dbReference type="SMR" id="Q0HEF8"/>
<dbReference type="GeneID" id="94729589"/>
<dbReference type="KEGG" id="she:Shewmr4_3493"/>
<dbReference type="HOGENOM" id="CLU_114306_4_3_6"/>
<dbReference type="GO" id="GO:1990904">
    <property type="term" value="C:ribonucleoprotein complex"/>
    <property type="evidence" value="ECO:0007669"/>
    <property type="project" value="UniProtKB-KW"/>
</dbReference>
<dbReference type="GO" id="GO:0005840">
    <property type="term" value="C:ribosome"/>
    <property type="evidence" value="ECO:0007669"/>
    <property type="project" value="UniProtKB-KW"/>
</dbReference>
<dbReference type="GO" id="GO:0046872">
    <property type="term" value="F:metal ion binding"/>
    <property type="evidence" value="ECO:0007669"/>
    <property type="project" value="UniProtKB-KW"/>
</dbReference>
<dbReference type="GO" id="GO:0019843">
    <property type="term" value="F:rRNA binding"/>
    <property type="evidence" value="ECO:0007669"/>
    <property type="project" value="UniProtKB-KW"/>
</dbReference>
<dbReference type="GO" id="GO:0003735">
    <property type="term" value="F:structural constituent of ribosome"/>
    <property type="evidence" value="ECO:0007669"/>
    <property type="project" value="InterPro"/>
</dbReference>
<dbReference type="GO" id="GO:0006412">
    <property type="term" value="P:translation"/>
    <property type="evidence" value="ECO:0007669"/>
    <property type="project" value="UniProtKB-UniRule"/>
</dbReference>
<dbReference type="Gene3D" id="4.10.830.30">
    <property type="entry name" value="Ribosomal protein L31"/>
    <property type="match status" value="1"/>
</dbReference>
<dbReference type="HAMAP" id="MF_00501">
    <property type="entry name" value="Ribosomal_bL31_1"/>
    <property type="match status" value="1"/>
</dbReference>
<dbReference type="InterPro" id="IPR034704">
    <property type="entry name" value="Ribosomal_bL28/bL31-like_sf"/>
</dbReference>
<dbReference type="InterPro" id="IPR002150">
    <property type="entry name" value="Ribosomal_bL31"/>
</dbReference>
<dbReference type="InterPro" id="IPR027491">
    <property type="entry name" value="Ribosomal_bL31_A"/>
</dbReference>
<dbReference type="InterPro" id="IPR042105">
    <property type="entry name" value="Ribosomal_bL31_sf"/>
</dbReference>
<dbReference type="NCBIfam" id="TIGR00105">
    <property type="entry name" value="L31"/>
    <property type="match status" value="1"/>
</dbReference>
<dbReference type="NCBIfam" id="NF000612">
    <property type="entry name" value="PRK00019.1"/>
    <property type="match status" value="1"/>
</dbReference>
<dbReference type="NCBIfam" id="NF001809">
    <property type="entry name" value="PRK00528.1"/>
    <property type="match status" value="1"/>
</dbReference>
<dbReference type="PANTHER" id="PTHR33280">
    <property type="entry name" value="50S RIBOSOMAL PROTEIN L31, CHLOROPLASTIC"/>
    <property type="match status" value="1"/>
</dbReference>
<dbReference type="PANTHER" id="PTHR33280:SF6">
    <property type="entry name" value="LARGE RIBOSOMAL SUBUNIT PROTEIN BL31A"/>
    <property type="match status" value="1"/>
</dbReference>
<dbReference type="Pfam" id="PF01197">
    <property type="entry name" value="Ribosomal_L31"/>
    <property type="match status" value="1"/>
</dbReference>
<dbReference type="PRINTS" id="PR01249">
    <property type="entry name" value="RIBOSOMALL31"/>
</dbReference>
<dbReference type="SUPFAM" id="SSF143800">
    <property type="entry name" value="L28p-like"/>
    <property type="match status" value="1"/>
</dbReference>
<dbReference type="PROSITE" id="PS01143">
    <property type="entry name" value="RIBOSOMAL_L31"/>
    <property type="match status" value="1"/>
</dbReference>
<reference key="1">
    <citation type="submission" date="2006-08" db="EMBL/GenBank/DDBJ databases">
        <title>Complete sequence of Shewanella sp. MR-4.</title>
        <authorList>
            <consortium name="US DOE Joint Genome Institute"/>
            <person name="Copeland A."/>
            <person name="Lucas S."/>
            <person name="Lapidus A."/>
            <person name="Barry K."/>
            <person name="Detter J.C."/>
            <person name="Glavina del Rio T."/>
            <person name="Hammon N."/>
            <person name="Israni S."/>
            <person name="Dalin E."/>
            <person name="Tice H."/>
            <person name="Pitluck S."/>
            <person name="Kiss H."/>
            <person name="Brettin T."/>
            <person name="Bruce D."/>
            <person name="Han C."/>
            <person name="Tapia R."/>
            <person name="Gilna P."/>
            <person name="Schmutz J."/>
            <person name="Larimer F."/>
            <person name="Land M."/>
            <person name="Hauser L."/>
            <person name="Kyrpides N."/>
            <person name="Mikhailova N."/>
            <person name="Nealson K."/>
            <person name="Konstantinidis K."/>
            <person name="Klappenbach J."/>
            <person name="Tiedje J."/>
            <person name="Richardson P."/>
        </authorList>
    </citation>
    <scope>NUCLEOTIDE SEQUENCE [LARGE SCALE GENOMIC DNA]</scope>
    <source>
        <strain>MR-4</strain>
    </source>
</reference>
<gene>
    <name evidence="1" type="primary">rpmE</name>
    <name type="ordered locus">Shewmr4_3493</name>
</gene>
<evidence type="ECO:0000255" key="1">
    <source>
        <dbReference type="HAMAP-Rule" id="MF_00501"/>
    </source>
</evidence>
<evidence type="ECO:0000305" key="2"/>
<proteinExistence type="inferred from homology"/>
<feature type="chain" id="PRO_1000126737" description="Large ribosomal subunit protein bL31">
    <location>
        <begin position="1"/>
        <end position="70"/>
    </location>
</feature>
<feature type="binding site" evidence="1">
    <location>
        <position position="16"/>
    </location>
    <ligand>
        <name>Zn(2+)</name>
        <dbReference type="ChEBI" id="CHEBI:29105"/>
    </ligand>
</feature>
<feature type="binding site" evidence="1">
    <location>
        <position position="18"/>
    </location>
    <ligand>
        <name>Zn(2+)</name>
        <dbReference type="ChEBI" id="CHEBI:29105"/>
    </ligand>
</feature>
<feature type="binding site" evidence="1">
    <location>
        <position position="37"/>
    </location>
    <ligand>
        <name>Zn(2+)</name>
        <dbReference type="ChEBI" id="CHEBI:29105"/>
    </ligand>
</feature>
<feature type="binding site" evidence="1">
    <location>
        <position position="40"/>
    </location>
    <ligand>
        <name>Zn(2+)</name>
        <dbReference type="ChEBI" id="CHEBI:29105"/>
    </ligand>
</feature>
<organism>
    <name type="scientific">Shewanella sp. (strain MR-4)</name>
    <dbReference type="NCBI Taxonomy" id="60480"/>
    <lineage>
        <taxon>Bacteria</taxon>
        <taxon>Pseudomonadati</taxon>
        <taxon>Pseudomonadota</taxon>
        <taxon>Gammaproteobacteria</taxon>
        <taxon>Alteromonadales</taxon>
        <taxon>Shewanellaceae</taxon>
        <taxon>Shewanella</taxon>
    </lineage>
</organism>